<comment type="function">
    <text evidence="1">May play a key role in the regulation of the intracellular concentration of adenosylhomocysteine.</text>
</comment>
<comment type="catalytic activity">
    <reaction evidence="1">
        <text>S-adenosyl-L-homocysteine + H2O = L-homocysteine + adenosine</text>
        <dbReference type="Rhea" id="RHEA:21708"/>
        <dbReference type="ChEBI" id="CHEBI:15377"/>
        <dbReference type="ChEBI" id="CHEBI:16335"/>
        <dbReference type="ChEBI" id="CHEBI:57856"/>
        <dbReference type="ChEBI" id="CHEBI:58199"/>
        <dbReference type="EC" id="3.13.2.1"/>
    </reaction>
</comment>
<comment type="cofactor">
    <cofactor evidence="1">
        <name>NAD(+)</name>
        <dbReference type="ChEBI" id="CHEBI:57540"/>
    </cofactor>
    <text evidence="1">Binds 1 NAD(+) per subunit.</text>
</comment>
<comment type="pathway">
    <text evidence="1">Amino-acid biosynthesis; L-homocysteine biosynthesis; L-homocysteine from S-adenosyl-L-homocysteine: step 1/1.</text>
</comment>
<comment type="subcellular location">
    <subcellularLocation>
        <location evidence="1">Cytoplasm</location>
    </subcellularLocation>
</comment>
<comment type="similarity">
    <text evidence="1">Belongs to the adenosylhomocysteinase family.</text>
</comment>
<proteinExistence type="inferred from homology"/>
<feature type="chain" id="PRO_0000116961" description="Adenosylhomocysteinase">
    <location>
        <begin position="1"/>
        <end position="438"/>
    </location>
</feature>
<feature type="binding site" evidence="1">
    <location>
        <position position="64"/>
    </location>
    <ligand>
        <name>substrate</name>
    </ligand>
</feature>
<feature type="binding site" evidence="1">
    <location>
        <position position="139"/>
    </location>
    <ligand>
        <name>substrate</name>
    </ligand>
</feature>
<feature type="binding site" evidence="1">
    <location>
        <position position="164"/>
    </location>
    <ligand>
        <name>substrate</name>
    </ligand>
</feature>
<feature type="binding site" evidence="1">
    <location>
        <begin position="165"/>
        <end position="167"/>
    </location>
    <ligand>
        <name>NAD(+)</name>
        <dbReference type="ChEBI" id="CHEBI:57540"/>
    </ligand>
</feature>
<feature type="binding site" evidence="1">
    <location>
        <position position="194"/>
    </location>
    <ligand>
        <name>substrate</name>
    </ligand>
</feature>
<feature type="binding site" evidence="1">
    <location>
        <position position="198"/>
    </location>
    <ligand>
        <name>substrate</name>
    </ligand>
</feature>
<feature type="binding site" evidence="1">
    <location>
        <position position="199"/>
    </location>
    <ligand>
        <name>NAD(+)</name>
        <dbReference type="ChEBI" id="CHEBI:57540"/>
    </ligand>
</feature>
<feature type="binding site" evidence="1">
    <location>
        <begin position="228"/>
        <end position="233"/>
    </location>
    <ligand>
        <name>NAD(+)</name>
        <dbReference type="ChEBI" id="CHEBI:57540"/>
    </ligand>
</feature>
<feature type="binding site" evidence="1">
    <location>
        <position position="251"/>
    </location>
    <ligand>
        <name>NAD(+)</name>
        <dbReference type="ChEBI" id="CHEBI:57540"/>
    </ligand>
</feature>
<feature type="binding site" evidence="1">
    <location>
        <position position="286"/>
    </location>
    <ligand>
        <name>NAD(+)</name>
        <dbReference type="ChEBI" id="CHEBI:57540"/>
    </ligand>
</feature>
<feature type="binding site" evidence="1">
    <location>
        <begin position="307"/>
        <end position="309"/>
    </location>
    <ligand>
        <name>NAD(+)</name>
        <dbReference type="ChEBI" id="CHEBI:57540"/>
    </ligand>
</feature>
<feature type="binding site" evidence="1">
    <location>
        <position position="352"/>
    </location>
    <ligand>
        <name>NAD(+)</name>
        <dbReference type="ChEBI" id="CHEBI:57540"/>
    </ligand>
</feature>
<accession>Q83A77</accession>
<reference key="1">
    <citation type="journal article" date="2003" name="Proc. Natl. Acad. Sci. U.S.A.">
        <title>Complete genome sequence of the Q-fever pathogen, Coxiella burnetii.</title>
        <authorList>
            <person name="Seshadri R."/>
            <person name="Paulsen I.T."/>
            <person name="Eisen J.A."/>
            <person name="Read T.D."/>
            <person name="Nelson K.E."/>
            <person name="Nelson W.C."/>
            <person name="Ward N.L."/>
            <person name="Tettelin H."/>
            <person name="Davidsen T.M."/>
            <person name="Beanan M.J."/>
            <person name="DeBoy R.T."/>
            <person name="Daugherty S.C."/>
            <person name="Brinkac L.M."/>
            <person name="Madupu R."/>
            <person name="Dodson R.J."/>
            <person name="Khouri H.M."/>
            <person name="Lee K.H."/>
            <person name="Carty H.A."/>
            <person name="Scanlan D."/>
            <person name="Heinzen R.A."/>
            <person name="Thompson H.A."/>
            <person name="Samuel J.E."/>
            <person name="Fraser C.M."/>
            <person name="Heidelberg J.F."/>
        </authorList>
    </citation>
    <scope>NUCLEOTIDE SEQUENCE [LARGE SCALE GENOMIC DNA]</scope>
    <source>
        <strain>RSA 493 / Nine Mile phase I</strain>
    </source>
</reference>
<sequence length="438" mass="48868">MENDMETATMTQDYHIANINLADWGRKEIEIAETEMPGLMALRKKYKNAKPLKGARIAGCIHMTIQTAVLIETLMLLGAEVRWSSCNIFSTQDHAAAALAQKGIPIFAWKGETEEEYWRCIASTLEGPKGWTPNLLLDDGGDLTAHTLQKHPELCQNIRGVSEETTTGVHRLYRMLKEGSLKFPAINVNDSVTKSKFDNLYGCRESLIDSIKRATDVMIAGKRVVVCGYGDVGKGCAQSLRAYGATVYITEIDPICALQAAMEGYRVVTMDEMADSADIFVTATGNTDIITHEHMLKMKDQAIVCNIGHFDNEIDIASLQDYQWMNIKPQVDQVIFPDGKRLTVLAQGRLVNLGCATGHPSFVMSNSFTNQVLAQIELWQYPEKYPIGVYVLPKHLDEEVARLHLERVGGKLTTLTEKQADYIGVDPEGPFKSEHYRY</sequence>
<keyword id="KW-0963">Cytoplasm</keyword>
<keyword id="KW-0378">Hydrolase</keyword>
<keyword id="KW-0520">NAD</keyword>
<keyword id="KW-0554">One-carbon metabolism</keyword>
<keyword id="KW-1185">Reference proteome</keyword>
<organism>
    <name type="scientific">Coxiella burnetii (strain RSA 493 / Nine Mile phase I)</name>
    <dbReference type="NCBI Taxonomy" id="227377"/>
    <lineage>
        <taxon>Bacteria</taxon>
        <taxon>Pseudomonadati</taxon>
        <taxon>Pseudomonadota</taxon>
        <taxon>Gammaproteobacteria</taxon>
        <taxon>Legionellales</taxon>
        <taxon>Coxiellaceae</taxon>
        <taxon>Coxiella</taxon>
    </lineage>
</organism>
<gene>
    <name evidence="1" type="primary">ahcY</name>
    <name type="ordered locus">CBU_2031</name>
</gene>
<protein>
    <recommendedName>
        <fullName evidence="1">Adenosylhomocysteinase</fullName>
        <ecNumber evidence="1">3.13.2.1</ecNumber>
    </recommendedName>
    <alternativeName>
        <fullName evidence="1">S-adenosyl-L-homocysteine hydrolase</fullName>
        <shortName evidence="1">AdoHcyase</shortName>
    </alternativeName>
</protein>
<dbReference type="EC" id="3.13.2.1" evidence="1"/>
<dbReference type="EMBL" id="AE016828">
    <property type="protein sequence ID" value="AAO91518.2"/>
    <property type="molecule type" value="Genomic_DNA"/>
</dbReference>
<dbReference type="RefSeq" id="NP_821004.2">
    <property type="nucleotide sequence ID" value="NC_002971.4"/>
</dbReference>
<dbReference type="RefSeq" id="WP_010958614.1">
    <property type="nucleotide sequence ID" value="NZ_CCYB01000066.1"/>
</dbReference>
<dbReference type="SMR" id="Q83A77"/>
<dbReference type="STRING" id="227377.CBU_2031"/>
<dbReference type="EnsemblBacteria" id="AAO91518">
    <property type="protein sequence ID" value="AAO91518"/>
    <property type="gene ID" value="CBU_2031"/>
</dbReference>
<dbReference type="GeneID" id="1209944"/>
<dbReference type="KEGG" id="cbu:CBU_2031"/>
<dbReference type="PATRIC" id="fig|227377.7.peg.2024"/>
<dbReference type="eggNOG" id="COG0499">
    <property type="taxonomic scope" value="Bacteria"/>
</dbReference>
<dbReference type="HOGENOM" id="CLU_025194_2_1_6"/>
<dbReference type="OrthoDB" id="9802717at2"/>
<dbReference type="UniPathway" id="UPA00314">
    <property type="reaction ID" value="UER00076"/>
</dbReference>
<dbReference type="Proteomes" id="UP000002671">
    <property type="component" value="Chromosome"/>
</dbReference>
<dbReference type="GO" id="GO:0005829">
    <property type="term" value="C:cytosol"/>
    <property type="evidence" value="ECO:0000318"/>
    <property type="project" value="GO_Central"/>
</dbReference>
<dbReference type="GO" id="GO:0004013">
    <property type="term" value="F:adenosylhomocysteinase activity"/>
    <property type="evidence" value="ECO:0000318"/>
    <property type="project" value="GO_Central"/>
</dbReference>
<dbReference type="GO" id="GO:0071269">
    <property type="term" value="P:L-homocysteine biosynthetic process"/>
    <property type="evidence" value="ECO:0007669"/>
    <property type="project" value="UniProtKB-UniRule"/>
</dbReference>
<dbReference type="GO" id="GO:0006730">
    <property type="term" value="P:one-carbon metabolic process"/>
    <property type="evidence" value="ECO:0007669"/>
    <property type="project" value="UniProtKB-KW"/>
</dbReference>
<dbReference type="GO" id="GO:0033353">
    <property type="term" value="P:S-adenosylmethionine cycle"/>
    <property type="evidence" value="ECO:0000318"/>
    <property type="project" value="GO_Central"/>
</dbReference>
<dbReference type="CDD" id="cd00401">
    <property type="entry name" value="SAHH"/>
    <property type="match status" value="1"/>
</dbReference>
<dbReference type="FunFam" id="3.40.50.1480:FF:000006">
    <property type="entry name" value="Adenosylhomocysteinase"/>
    <property type="match status" value="1"/>
</dbReference>
<dbReference type="FunFam" id="3.40.50.720:FF:000004">
    <property type="entry name" value="Adenosylhomocysteinase"/>
    <property type="match status" value="1"/>
</dbReference>
<dbReference type="Gene3D" id="3.40.50.1480">
    <property type="entry name" value="Adenosylhomocysteinase-like"/>
    <property type="match status" value="2"/>
</dbReference>
<dbReference type="Gene3D" id="3.40.50.720">
    <property type="entry name" value="NAD(P)-binding Rossmann-like Domain"/>
    <property type="match status" value="1"/>
</dbReference>
<dbReference type="HAMAP" id="MF_00563">
    <property type="entry name" value="AdoHcyase"/>
    <property type="match status" value="1"/>
</dbReference>
<dbReference type="InterPro" id="IPR042172">
    <property type="entry name" value="Adenosylhomocyst_ase-like_sf"/>
</dbReference>
<dbReference type="InterPro" id="IPR000043">
    <property type="entry name" value="Adenosylhomocysteinase-like"/>
</dbReference>
<dbReference type="InterPro" id="IPR015878">
    <property type="entry name" value="Ado_hCys_hydrolase_NAD-bd"/>
</dbReference>
<dbReference type="InterPro" id="IPR036291">
    <property type="entry name" value="NAD(P)-bd_dom_sf"/>
</dbReference>
<dbReference type="InterPro" id="IPR020082">
    <property type="entry name" value="S-Ado-L-homoCys_hydrolase_CS"/>
</dbReference>
<dbReference type="NCBIfam" id="TIGR00936">
    <property type="entry name" value="ahcY"/>
    <property type="match status" value="1"/>
</dbReference>
<dbReference type="NCBIfam" id="NF004005">
    <property type="entry name" value="PRK05476.2-3"/>
    <property type="match status" value="1"/>
</dbReference>
<dbReference type="PANTHER" id="PTHR23420">
    <property type="entry name" value="ADENOSYLHOMOCYSTEINASE"/>
    <property type="match status" value="1"/>
</dbReference>
<dbReference type="PANTHER" id="PTHR23420:SF0">
    <property type="entry name" value="ADENOSYLHOMOCYSTEINASE"/>
    <property type="match status" value="1"/>
</dbReference>
<dbReference type="Pfam" id="PF05221">
    <property type="entry name" value="AdoHcyase"/>
    <property type="match status" value="2"/>
</dbReference>
<dbReference type="Pfam" id="PF00670">
    <property type="entry name" value="AdoHcyase_NAD"/>
    <property type="match status" value="1"/>
</dbReference>
<dbReference type="PIRSF" id="PIRSF001109">
    <property type="entry name" value="Ad_hcy_hydrolase"/>
    <property type="match status" value="1"/>
</dbReference>
<dbReference type="SMART" id="SM00996">
    <property type="entry name" value="AdoHcyase"/>
    <property type="match status" value="1"/>
</dbReference>
<dbReference type="SMART" id="SM00997">
    <property type="entry name" value="AdoHcyase_NAD"/>
    <property type="match status" value="1"/>
</dbReference>
<dbReference type="SUPFAM" id="SSF52283">
    <property type="entry name" value="Formate/glycerate dehydrogenase catalytic domain-like"/>
    <property type="match status" value="1"/>
</dbReference>
<dbReference type="SUPFAM" id="SSF51735">
    <property type="entry name" value="NAD(P)-binding Rossmann-fold domains"/>
    <property type="match status" value="1"/>
</dbReference>
<dbReference type="PROSITE" id="PS00738">
    <property type="entry name" value="ADOHCYASE_1"/>
    <property type="match status" value="1"/>
</dbReference>
<dbReference type="PROSITE" id="PS00739">
    <property type="entry name" value="ADOHCYASE_2"/>
    <property type="match status" value="1"/>
</dbReference>
<evidence type="ECO:0000255" key="1">
    <source>
        <dbReference type="HAMAP-Rule" id="MF_00563"/>
    </source>
</evidence>
<name>SAHH_COXBU</name>